<proteinExistence type="inferred from homology"/>
<gene>
    <name evidence="1" type="primary">rplQ</name>
    <name type="ordered locus">BUAP5A_491</name>
</gene>
<organism>
    <name type="scientific">Buchnera aphidicola subsp. Acyrthosiphon pisum (strain 5A)</name>
    <dbReference type="NCBI Taxonomy" id="563178"/>
    <lineage>
        <taxon>Bacteria</taxon>
        <taxon>Pseudomonadati</taxon>
        <taxon>Pseudomonadota</taxon>
        <taxon>Gammaproteobacteria</taxon>
        <taxon>Enterobacterales</taxon>
        <taxon>Erwiniaceae</taxon>
        <taxon>Buchnera</taxon>
    </lineage>
</organism>
<feature type="chain" id="PRO_1000184005" description="Large ribosomal subunit protein bL17">
    <location>
        <begin position="1"/>
        <end position="130"/>
    </location>
</feature>
<protein>
    <recommendedName>
        <fullName evidence="1">Large ribosomal subunit protein bL17</fullName>
    </recommendedName>
    <alternativeName>
        <fullName evidence="2">50S ribosomal protein L17</fullName>
    </alternativeName>
</protein>
<sequence>MRHRKSGRQLNRSSTHLNSMLKNMACSLFTHEVIKTTLSKAKELRRIVEPIITLSKIDTVSHRRLVFSRIRDNAIVAKLFKKLGPCFFSRLGGYTRILKCGFRSGDKAPMAYIELVDRVKNNKKNEILKK</sequence>
<comment type="subunit">
    <text evidence="1">Part of the 50S ribosomal subunit. Contacts protein L32.</text>
</comment>
<comment type="similarity">
    <text evidence="1">Belongs to the bacterial ribosomal protein bL17 family.</text>
</comment>
<evidence type="ECO:0000255" key="1">
    <source>
        <dbReference type="HAMAP-Rule" id="MF_01368"/>
    </source>
</evidence>
<evidence type="ECO:0000305" key="2"/>
<name>RL17_BUCA5</name>
<keyword id="KW-0687">Ribonucleoprotein</keyword>
<keyword id="KW-0689">Ribosomal protein</keyword>
<accession>B8D9S1</accession>
<dbReference type="EMBL" id="CP001161">
    <property type="protein sequence ID" value="ACL30842.1"/>
    <property type="molecule type" value="Genomic_DNA"/>
</dbReference>
<dbReference type="RefSeq" id="WP_009874449.1">
    <property type="nucleotide sequence ID" value="NC_011833.1"/>
</dbReference>
<dbReference type="SMR" id="B8D9S1"/>
<dbReference type="KEGG" id="bap:BUAP5A_491"/>
<dbReference type="HOGENOM" id="CLU_074407_2_0_6"/>
<dbReference type="OrthoDB" id="9809073at2"/>
<dbReference type="Proteomes" id="UP000006904">
    <property type="component" value="Chromosome"/>
</dbReference>
<dbReference type="GO" id="GO:0022625">
    <property type="term" value="C:cytosolic large ribosomal subunit"/>
    <property type="evidence" value="ECO:0007669"/>
    <property type="project" value="TreeGrafter"/>
</dbReference>
<dbReference type="GO" id="GO:0003735">
    <property type="term" value="F:structural constituent of ribosome"/>
    <property type="evidence" value="ECO:0007669"/>
    <property type="project" value="InterPro"/>
</dbReference>
<dbReference type="GO" id="GO:0006412">
    <property type="term" value="P:translation"/>
    <property type="evidence" value="ECO:0007669"/>
    <property type="project" value="UniProtKB-UniRule"/>
</dbReference>
<dbReference type="FunFam" id="3.90.1030.10:FF:000001">
    <property type="entry name" value="50S ribosomal protein L17"/>
    <property type="match status" value="1"/>
</dbReference>
<dbReference type="Gene3D" id="3.90.1030.10">
    <property type="entry name" value="Ribosomal protein L17"/>
    <property type="match status" value="1"/>
</dbReference>
<dbReference type="HAMAP" id="MF_01368">
    <property type="entry name" value="Ribosomal_bL17"/>
    <property type="match status" value="1"/>
</dbReference>
<dbReference type="InterPro" id="IPR000456">
    <property type="entry name" value="Ribosomal_bL17"/>
</dbReference>
<dbReference type="InterPro" id="IPR047859">
    <property type="entry name" value="Ribosomal_bL17_CS"/>
</dbReference>
<dbReference type="InterPro" id="IPR036373">
    <property type="entry name" value="Ribosomal_bL17_sf"/>
</dbReference>
<dbReference type="NCBIfam" id="TIGR00059">
    <property type="entry name" value="L17"/>
    <property type="match status" value="1"/>
</dbReference>
<dbReference type="PANTHER" id="PTHR14413:SF16">
    <property type="entry name" value="LARGE RIBOSOMAL SUBUNIT PROTEIN BL17M"/>
    <property type="match status" value="1"/>
</dbReference>
<dbReference type="PANTHER" id="PTHR14413">
    <property type="entry name" value="RIBOSOMAL PROTEIN L17"/>
    <property type="match status" value="1"/>
</dbReference>
<dbReference type="Pfam" id="PF01196">
    <property type="entry name" value="Ribosomal_L17"/>
    <property type="match status" value="1"/>
</dbReference>
<dbReference type="SUPFAM" id="SSF64263">
    <property type="entry name" value="Prokaryotic ribosomal protein L17"/>
    <property type="match status" value="1"/>
</dbReference>
<dbReference type="PROSITE" id="PS01167">
    <property type="entry name" value="RIBOSOMAL_L17"/>
    <property type="match status" value="1"/>
</dbReference>
<reference key="1">
    <citation type="journal article" date="2009" name="Science">
        <title>The dynamics and time scale of ongoing genomic erosion in symbiotic bacteria.</title>
        <authorList>
            <person name="Moran N.A."/>
            <person name="McLaughlin H.J."/>
            <person name="Sorek R."/>
        </authorList>
    </citation>
    <scope>NUCLEOTIDE SEQUENCE [LARGE SCALE GENOMIC DNA]</scope>
    <source>
        <strain>5A</strain>
    </source>
</reference>